<protein>
    <recommendedName>
        <fullName>Signal peptide peptidase-like 2</fullName>
        <shortName>AtSPPL2</shortName>
        <ecNumber>3.4.23.-</ecNumber>
    </recommendedName>
</protein>
<comment type="function">
    <text evidence="1">Intramembrane-cleaving aspartic protease (I-CLiP) that cleaves type II membrane signal peptides in the hydrophobic plane of the membrane.</text>
</comment>
<comment type="subcellular location">
    <subcellularLocation>
        <location evidence="3">Endosome membrane</location>
        <topology evidence="3">Multi-pass membrane protein</topology>
    </subcellularLocation>
</comment>
<comment type="alternative products">
    <event type="alternative splicing"/>
    <isoform>
        <id>Q8W469-1</id>
        <name>1</name>
        <sequence type="displayed"/>
    </isoform>
    <text>A number of isoforms are produced. According to EST sequences.</text>
</comment>
<comment type="tissue specificity">
    <text evidence="3">Ubiquitous.</text>
</comment>
<comment type="developmental stage">
    <text evidence="3">Expressed in the shoot meristem and root epidermal cells in germinating seeds.</text>
</comment>
<comment type="domain">
    <text evidence="1">The PAL motif is required for normal active site conformation.</text>
</comment>
<comment type="PTM">
    <text evidence="1">Glycosylated.</text>
</comment>
<comment type="similarity">
    <text evidence="4">Belongs to the peptidase A22B family.</text>
</comment>
<comment type="sequence caution" evidence="4">
    <conflict type="erroneous gene model prediction">
        <sequence resource="EMBL-CDS" id="AAG52428"/>
    </conflict>
</comment>
<evidence type="ECO:0000250" key="1"/>
<evidence type="ECO:0000255" key="2"/>
<evidence type="ECO:0000269" key="3">
    <source>
    </source>
</evidence>
<evidence type="ECO:0000305" key="4"/>
<sequence>MDSLRFLRILLLSSSILLLSLRSTVTAGDIVHQDNLAPKKPGCENDFVLVKVQTWIDGVENEEFVGVGARFGKRIVSKEKNANQTHLVFANPRDSCTPLKNKLSGDVVIVERGNCRFTAKANNAEAAGASALLIINNQKELYKMVCEPDETDLDIQIPAVMLPQDAGASLQKMLANSSKVSAQLYSPRRPAVDVAEVFLWLMAIGTILCASYWSAWSAREAAIEHDKLLKDAIDEIPNTNDGGSGVVEINSISAIFFVVLASGFLVILYKLMSYWFVELLVVVFCIGGVEGLQTCLVALLSRWFQRAADTYVKVPFLGPISYLTLAVSPFCIVFAVLWAVYRVHSFAWIGQDVLGIALIITVLQIVHVPNLKVGTVLLSCAFLYDIFWVFVSKKLFHESVMIVVARGDKSGEDGIPMLLKIPRMFDPWGGYSIIGFGDILLPGLLIAFALRYDWLANKTLRTGYFIWAMVAYGLGLLITYVALNLMDGHGQPALLYIVPFTLGTMLTLARKRDDLWILWTKGEPERACPHHVRLEQCSEK</sequence>
<name>SIPL2_ARATH</name>
<keyword id="KW-0025">Alternative splicing</keyword>
<keyword id="KW-0967">Endosome</keyword>
<keyword id="KW-0325">Glycoprotein</keyword>
<keyword id="KW-0378">Hydrolase</keyword>
<keyword id="KW-0472">Membrane</keyword>
<keyword id="KW-0645">Protease</keyword>
<keyword id="KW-1185">Reference proteome</keyword>
<keyword id="KW-0732">Signal</keyword>
<keyword id="KW-0812">Transmembrane</keyword>
<keyword id="KW-1133">Transmembrane helix</keyword>
<accession>Q8W469</accession>
<accession>Q8LCK4</accession>
<accession>Q9CAD4</accession>
<gene>
    <name type="primary">SPPL2</name>
    <name type="ordered locus">At1g63690</name>
    <name type="ORF">F24D7.12</name>
</gene>
<dbReference type="EC" id="3.4.23.-"/>
<dbReference type="EMBL" id="AC011622">
    <property type="protein sequence ID" value="AAG52428.1"/>
    <property type="status" value="ALT_SEQ"/>
    <property type="molecule type" value="Genomic_DNA"/>
</dbReference>
<dbReference type="EMBL" id="CP002684">
    <property type="protein sequence ID" value="AEE34134.1"/>
    <property type="molecule type" value="Genomic_DNA"/>
</dbReference>
<dbReference type="EMBL" id="AY062807">
    <property type="protein sequence ID" value="AAL32885.1"/>
    <property type="molecule type" value="mRNA"/>
</dbReference>
<dbReference type="EMBL" id="BT008895">
    <property type="protein sequence ID" value="AAP68334.1"/>
    <property type="molecule type" value="mRNA"/>
</dbReference>
<dbReference type="EMBL" id="AY086545">
    <property type="protein sequence ID" value="AAM63609.1"/>
    <property type="molecule type" value="mRNA"/>
</dbReference>
<dbReference type="PIR" id="H96661">
    <property type="entry name" value="H96661"/>
</dbReference>
<dbReference type="RefSeq" id="NP_564815.1">
    <molecule id="Q8W469-1"/>
    <property type="nucleotide sequence ID" value="NM_105046.3"/>
</dbReference>
<dbReference type="SMR" id="Q8W469"/>
<dbReference type="BioGRID" id="27894">
    <property type="interactions" value="1"/>
</dbReference>
<dbReference type="FunCoup" id="Q8W469">
    <property type="interactions" value="1375"/>
</dbReference>
<dbReference type="STRING" id="3702.Q8W469"/>
<dbReference type="MEROPS" id="A22.A05"/>
<dbReference type="GlyCosmos" id="Q8W469">
    <property type="glycosylation" value="2 sites, No reported glycans"/>
</dbReference>
<dbReference type="GlyGen" id="Q8W469">
    <property type="glycosylation" value="2 sites"/>
</dbReference>
<dbReference type="PaxDb" id="3702-AT1G63690.1"/>
<dbReference type="ProteomicsDB" id="232536">
    <molecule id="Q8W469-1"/>
</dbReference>
<dbReference type="EnsemblPlants" id="AT1G63690.1">
    <molecule id="Q8W469-1"/>
    <property type="protein sequence ID" value="AT1G63690.1"/>
    <property type="gene ID" value="AT1G63690"/>
</dbReference>
<dbReference type="GeneID" id="842673"/>
<dbReference type="Gramene" id="AT1G63690.1">
    <molecule id="Q8W469-1"/>
    <property type="protein sequence ID" value="AT1G63690.1"/>
    <property type="gene ID" value="AT1G63690"/>
</dbReference>
<dbReference type="KEGG" id="ath:AT1G63690"/>
<dbReference type="Araport" id="AT1G63690"/>
<dbReference type="TAIR" id="AT1G63690">
    <property type="gene designation" value="SPPL2"/>
</dbReference>
<dbReference type="eggNOG" id="KOG2442">
    <property type="taxonomic scope" value="Eukaryota"/>
</dbReference>
<dbReference type="HOGENOM" id="CLU_023799_4_1_1"/>
<dbReference type="InParanoid" id="Q8W469"/>
<dbReference type="PhylomeDB" id="Q8W469"/>
<dbReference type="PRO" id="PR:Q8W469"/>
<dbReference type="Proteomes" id="UP000006548">
    <property type="component" value="Chromosome 1"/>
</dbReference>
<dbReference type="ExpressionAtlas" id="Q8W469">
    <property type="expression patterns" value="baseline and differential"/>
</dbReference>
<dbReference type="GO" id="GO:0005768">
    <property type="term" value="C:endosome"/>
    <property type="evidence" value="ECO:0000314"/>
    <property type="project" value="UniProtKB"/>
</dbReference>
<dbReference type="GO" id="GO:0010008">
    <property type="term" value="C:endosome membrane"/>
    <property type="evidence" value="ECO:0007669"/>
    <property type="project" value="UniProtKB-SubCell"/>
</dbReference>
<dbReference type="GO" id="GO:0042500">
    <property type="term" value="F:aspartic endopeptidase activity, intramembrane cleaving"/>
    <property type="evidence" value="ECO:0007669"/>
    <property type="project" value="InterPro"/>
</dbReference>
<dbReference type="GO" id="GO:0006508">
    <property type="term" value="P:proteolysis"/>
    <property type="evidence" value="ECO:0007669"/>
    <property type="project" value="UniProtKB-KW"/>
</dbReference>
<dbReference type="CDD" id="cd02132">
    <property type="entry name" value="PA_GO-like"/>
    <property type="match status" value="1"/>
</dbReference>
<dbReference type="FunFam" id="3.50.30.30:FF:000007">
    <property type="entry name" value="Signal peptide peptidase-like 3"/>
    <property type="match status" value="1"/>
</dbReference>
<dbReference type="Gene3D" id="3.50.30.30">
    <property type="match status" value="1"/>
</dbReference>
<dbReference type="InterPro" id="IPR046450">
    <property type="entry name" value="PA_dom_sf"/>
</dbReference>
<dbReference type="InterPro" id="IPR003137">
    <property type="entry name" value="PA_domain"/>
</dbReference>
<dbReference type="InterPro" id="IPR007369">
    <property type="entry name" value="Peptidase_A22B_SPP"/>
</dbReference>
<dbReference type="InterPro" id="IPR006639">
    <property type="entry name" value="Preselin/SPP"/>
</dbReference>
<dbReference type="PANTHER" id="PTHR12174">
    <property type="entry name" value="SIGNAL PEPTIDE PEPTIDASE"/>
    <property type="match status" value="1"/>
</dbReference>
<dbReference type="PANTHER" id="PTHR12174:SF75">
    <property type="entry name" value="SIGNAL PEPTIDE PEPTIDASE-LIKE 2"/>
    <property type="match status" value="1"/>
</dbReference>
<dbReference type="Pfam" id="PF02225">
    <property type="entry name" value="PA"/>
    <property type="match status" value="1"/>
</dbReference>
<dbReference type="Pfam" id="PF04258">
    <property type="entry name" value="Peptidase_A22B"/>
    <property type="match status" value="1"/>
</dbReference>
<dbReference type="SMART" id="SM00730">
    <property type="entry name" value="PSN"/>
    <property type="match status" value="1"/>
</dbReference>
<dbReference type="SUPFAM" id="SSF52025">
    <property type="entry name" value="PA domain"/>
    <property type="match status" value="1"/>
</dbReference>
<organism>
    <name type="scientific">Arabidopsis thaliana</name>
    <name type="common">Mouse-ear cress</name>
    <dbReference type="NCBI Taxonomy" id="3702"/>
    <lineage>
        <taxon>Eukaryota</taxon>
        <taxon>Viridiplantae</taxon>
        <taxon>Streptophyta</taxon>
        <taxon>Embryophyta</taxon>
        <taxon>Tracheophyta</taxon>
        <taxon>Spermatophyta</taxon>
        <taxon>Magnoliopsida</taxon>
        <taxon>eudicotyledons</taxon>
        <taxon>Gunneridae</taxon>
        <taxon>Pentapetalae</taxon>
        <taxon>rosids</taxon>
        <taxon>malvids</taxon>
        <taxon>Brassicales</taxon>
        <taxon>Brassicaceae</taxon>
        <taxon>Camelineae</taxon>
        <taxon>Arabidopsis</taxon>
    </lineage>
</organism>
<reference key="1">
    <citation type="journal article" date="2000" name="Nature">
        <title>Sequence and analysis of chromosome 1 of the plant Arabidopsis thaliana.</title>
        <authorList>
            <person name="Theologis A."/>
            <person name="Ecker J.R."/>
            <person name="Palm C.J."/>
            <person name="Federspiel N.A."/>
            <person name="Kaul S."/>
            <person name="White O."/>
            <person name="Alonso J."/>
            <person name="Altafi H."/>
            <person name="Araujo R."/>
            <person name="Bowman C.L."/>
            <person name="Brooks S.Y."/>
            <person name="Buehler E."/>
            <person name="Chan A."/>
            <person name="Chao Q."/>
            <person name="Chen H."/>
            <person name="Cheuk R.F."/>
            <person name="Chin C.W."/>
            <person name="Chung M.K."/>
            <person name="Conn L."/>
            <person name="Conway A.B."/>
            <person name="Conway A.R."/>
            <person name="Creasy T.H."/>
            <person name="Dewar K."/>
            <person name="Dunn P."/>
            <person name="Etgu P."/>
            <person name="Feldblyum T.V."/>
            <person name="Feng J.-D."/>
            <person name="Fong B."/>
            <person name="Fujii C.Y."/>
            <person name="Gill J.E."/>
            <person name="Goldsmith A.D."/>
            <person name="Haas B."/>
            <person name="Hansen N.F."/>
            <person name="Hughes B."/>
            <person name="Huizar L."/>
            <person name="Hunter J.L."/>
            <person name="Jenkins J."/>
            <person name="Johnson-Hopson C."/>
            <person name="Khan S."/>
            <person name="Khaykin E."/>
            <person name="Kim C.J."/>
            <person name="Koo H.L."/>
            <person name="Kremenetskaia I."/>
            <person name="Kurtz D.B."/>
            <person name="Kwan A."/>
            <person name="Lam B."/>
            <person name="Langin-Hooper S."/>
            <person name="Lee A."/>
            <person name="Lee J.M."/>
            <person name="Lenz C.A."/>
            <person name="Li J.H."/>
            <person name="Li Y.-P."/>
            <person name="Lin X."/>
            <person name="Liu S.X."/>
            <person name="Liu Z.A."/>
            <person name="Luros J.S."/>
            <person name="Maiti R."/>
            <person name="Marziali A."/>
            <person name="Militscher J."/>
            <person name="Miranda M."/>
            <person name="Nguyen M."/>
            <person name="Nierman W.C."/>
            <person name="Osborne B.I."/>
            <person name="Pai G."/>
            <person name="Peterson J."/>
            <person name="Pham P.K."/>
            <person name="Rizzo M."/>
            <person name="Rooney T."/>
            <person name="Rowley D."/>
            <person name="Sakano H."/>
            <person name="Salzberg S.L."/>
            <person name="Schwartz J.R."/>
            <person name="Shinn P."/>
            <person name="Southwick A.M."/>
            <person name="Sun H."/>
            <person name="Tallon L.J."/>
            <person name="Tambunga G."/>
            <person name="Toriumi M.J."/>
            <person name="Town C.D."/>
            <person name="Utterback T."/>
            <person name="Van Aken S."/>
            <person name="Vaysberg M."/>
            <person name="Vysotskaia V.S."/>
            <person name="Walker M."/>
            <person name="Wu D."/>
            <person name="Yu G."/>
            <person name="Fraser C.M."/>
            <person name="Venter J.C."/>
            <person name="Davis R.W."/>
        </authorList>
    </citation>
    <scope>NUCLEOTIDE SEQUENCE [LARGE SCALE GENOMIC DNA]</scope>
    <source>
        <strain>cv. Columbia</strain>
    </source>
</reference>
<reference key="2">
    <citation type="journal article" date="2017" name="Plant J.">
        <title>Araport11: a complete reannotation of the Arabidopsis thaliana reference genome.</title>
        <authorList>
            <person name="Cheng C.Y."/>
            <person name="Krishnakumar V."/>
            <person name="Chan A.P."/>
            <person name="Thibaud-Nissen F."/>
            <person name="Schobel S."/>
            <person name="Town C.D."/>
        </authorList>
    </citation>
    <scope>GENOME REANNOTATION</scope>
    <source>
        <strain>cv. Columbia</strain>
    </source>
</reference>
<reference key="3">
    <citation type="journal article" date="2003" name="Science">
        <title>Empirical analysis of transcriptional activity in the Arabidopsis genome.</title>
        <authorList>
            <person name="Yamada K."/>
            <person name="Lim J."/>
            <person name="Dale J.M."/>
            <person name="Chen H."/>
            <person name="Shinn P."/>
            <person name="Palm C.J."/>
            <person name="Southwick A.M."/>
            <person name="Wu H.C."/>
            <person name="Kim C.J."/>
            <person name="Nguyen M."/>
            <person name="Pham P.K."/>
            <person name="Cheuk R.F."/>
            <person name="Karlin-Newmann G."/>
            <person name="Liu S.X."/>
            <person name="Lam B."/>
            <person name="Sakano H."/>
            <person name="Wu T."/>
            <person name="Yu G."/>
            <person name="Miranda M."/>
            <person name="Quach H.L."/>
            <person name="Tripp M."/>
            <person name="Chang C.H."/>
            <person name="Lee J.M."/>
            <person name="Toriumi M.J."/>
            <person name="Chan M.M."/>
            <person name="Tang C.C."/>
            <person name="Onodera C.S."/>
            <person name="Deng J.M."/>
            <person name="Akiyama K."/>
            <person name="Ansari Y."/>
            <person name="Arakawa T."/>
            <person name="Banh J."/>
            <person name="Banno F."/>
            <person name="Bowser L."/>
            <person name="Brooks S.Y."/>
            <person name="Carninci P."/>
            <person name="Chao Q."/>
            <person name="Choy N."/>
            <person name="Enju A."/>
            <person name="Goldsmith A.D."/>
            <person name="Gurjal M."/>
            <person name="Hansen N.F."/>
            <person name="Hayashizaki Y."/>
            <person name="Johnson-Hopson C."/>
            <person name="Hsuan V.W."/>
            <person name="Iida K."/>
            <person name="Karnes M."/>
            <person name="Khan S."/>
            <person name="Koesema E."/>
            <person name="Ishida J."/>
            <person name="Jiang P.X."/>
            <person name="Jones T."/>
            <person name="Kawai J."/>
            <person name="Kamiya A."/>
            <person name="Meyers C."/>
            <person name="Nakajima M."/>
            <person name="Narusaka M."/>
            <person name="Seki M."/>
            <person name="Sakurai T."/>
            <person name="Satou M."/>
            <person name="Tamse R."/>
            <person name="Vaysberg M."/>
            <person name="Wallender E.K."/>
            <person name="Wong C."/>
            <person name="Yamamura Y."/>
            <person name="Yuan S."/>
            <person name="Shinozaki K."/>
            <person name="Davis R.W."/>
            <person name="Theologis A."/>
            <person name="Ecker J.R."/>
        </authorList>
    </citation>
    <scope>NUCLEOTIDE SEQUENCE [LARGE SCALE MRNA]</scope>
    <source>
        <strain>cv. Columbia</strain>
    </source>
</reference>
<reference key="4">
    <citation type="submission" date="2002-03" db="EMBL/GenBank/DDBJ databases">
        <title>Full-length cDNA from Arabidopsis thaliana.</title>
        <authorList>
            <person name="Brover V.V."/>
            <person name="Troukhan M.E."/>
            <person name="Alexandrov N.A."/>
            <person name="Lu Y.-P."/>
            <person name="Flavell R.B."/>
            <person name="Feldmann K.A."/>
        </authorList>
    </citation>
    <scope>NUCLEOTIDE SEQUENCE [LARGE SCALE MRNA]</scope>
</reference>
<reference key="5">
    <citation type="journal article" date="2008" name="FEBS J.">
        <title>Signal peptide peptidase and its homologs in Arabidopsis thaliana - plant tissue-specific expression and distinct subcellular localization.</title>
        <authorList>
            <person name="Tamura T."/>
            <person name="Asakura T."/>
            <person name="Uemura T."/>
            <person name="Ueda T."/>
            <person name="Terauchi K."/>
            <person name="Misaka T."/>
            <person name="Abe K."/>
        </authorList>
    </citation>
    <scope>GENE FAMILY</scope>
    <scope>NOMENCLATURE</scope>
    <scope>TISSUE SPECIFICITY</scope>
    <scope>DEVELOPMENTAL STAGE</scope>
    <scope>SUBCELLULAR LOCATION</scope>
</reference>
<proteinExistence type="evidence at transcript level"/>
<feature type="signal peptide" evidence="2">
    <location>
        <begin position="1"/>
        <end position="27"/>
    </location>
</feature>
<feature type="chain" id="PRO_0000419094" description="Signal peptide peptidase-like 2">
    <location>
        <begin position="28"/>
        <end position="540"/>
    </location>
</feature>
<feature type="topological domain" description="Lumenal" evidence="2">
    <location>
        <begin position="28"/>
        <end position="196"/>
    </location>
</feature>
<feature type="transmembrane region" description="Helical" evidence="2">
    <location>
        <begin position="197"/>
        <end position="217"/>
    </location>
</feature>
<feature type="topological domain" description="Cytoplasmic" evidence="2">
    <location>
        <begin position="218"/>
        <end position="248"/>
    </location>
</feature>
<feature type="transmembrane region" description="Helical" evidence="2">
    <location>
        <begin position="249"/>
        <end position="269"/>
    </location>
</feature>
<feature type="topological domain" description="Lumenal" evidence="2">
    <location>
        <begin position="270"/>
        <end position="278"/>
    </location>
</feature>
<feature type="transmembrane region" description="Helical" evidence="2">
    <location>
        <begin position="279"/>
        <end position="299"/>
    </location>
</feature>
<feature type="topological domain" description="Cytoplasmic" evidence="2">
    <location>
        <begin position="300"/>
        <end position="319"/>
    </location>
</feature>
<feature type="transmembrane region" description="Helical" evidence="2">
    <location>
        <begin position="320"/>
        <end position="340"/>
    </location>
</feature>
<feature type="topological domain" description="Lumenal" evidence="2">
    <location>
        <begin position="341"/>
        <end position="345"/>
    </location>
</feature>
<feature type="transmembrane region" description="Helical" evidence="2">
    <location>
        <begin position="346"/>
        <end position="366"/>
    </location>
</feature>
<feature type="topological domain" description="Cytoplasmic" evidence="2">
    <location>
        <begin position="367"/>
        <end position="370"/>
    </location>
</feature>
<feature type="transmembrane region" description="Helical" evidence="2">
    <location>
        <begin position="371"/>
        <end position="391"/>
    </location>
</feature>
<feature type="topological domain" description="Lumenal" evidence="2">
    <location>
        <begin position="392"/>
        <end position="429"/>
    </location>
</feature>
<feature type="transmembrane region" description="Helical" evidence="2">
    <location>
        <begin position="430"/>
        <end position="450"/>
    </location>
</feature>
<feature type="topological domain" description="Cytoplasmic" evidence="2">
    <location>
        <begin position="451"/>
        <end position="462"/>
    </location>
</feature>
<feature type="transmembrane region" description="Helical" evidence="2">
    <location>
        <begin position="463"/>
        <end position="483"/>
    </location>
</feature>
<feature type="topological domain" description="Lumenal" evidence="2">
    <location>
        <begin position="484"/>
        <end position="488"/>
    </location>
</feature>
<feature type="transmembrane region" description="Helical" evidence="2">
    <location>
        <begin position="489"/>
        <end position="509"/>
    </location>
</feature>
<feature type="topological domain" description="Cytoplasmic" evidence="2">
    <location>
        <begin position="510"/>
        <end position="540"/>
    </location>
</feature>
<feature type="domain" description="PA">
    <location>
        <begin position="95"/>
        <end position="173"/>
    </location>
</feature>
<feature type="short sequence motif" description="PAL">
    <location>
        <begin position="492"/>
        <end position="494"/>
    </location>
</feature>
<feature type="active site" evidence="1">
    <location>
        <position position="385"/>
    </location>
</feature>
<feature type="active site" evidence="1">
    <location>
        <position position="438"/>
    </location>
</feature>
<feature type="glycosylation site" description="N-linked (GlcNAc...) asparagine" evidence="2">
    <location>
        <position position="83"/>
    </location>
</feature>
<feature type="glycosylation site" description="N-linked (GlcNAc...) asparagine" evidence="2">
    <location>
        <position position="176"/>
    </location>
</feature>
<feature type="sequence conflict" description="In Ref. 4; AAM63609." evidence="4" ref="4">
    <original>S</original>
    <variation>L</variation>
    <location>
        <position position="13"/>
    </location>
</feature>
<feature type="sequence conflict" description="In Ref. 4; AAM63609." evidence="4" ref="4">
    <original>W</original>
    <variation>C</variation>
    <location>
        <position position="200"/>
    </location>
</feature>
<feature type="sequence conflict" description="In Ref. 4; AAM63609." evidence="4" ref="4">
    <original>S</original>
    <variation>T</variation>
    <location>
        <position position="251"/>
    </location>
</feature>